<keyword id="KW-0963">Cytoplasm</keyword>
<keyword id="KW-0255">Endonuclease</keyword>
<keyword id="KW-0378">Hydrolase</keyword>
<keyword id="KW-0479">Metal-binding</keyword>
<keyword id="KW-0540">Nuclease</keyword>
<keyword id="KW-1185">Reference proteome</keyword>
<keyword id="KW-0690">Ribosome biogenesis</keyword>
<keyword id="KW-0698">rRNA processing</keyword>
<keyword id="KW-0862">Zinc</keyword>
<proteinExistence type="inferred from homology"/>
<feature type="chain" id="PRO_0000284291" description="Endoribonuclease YbeY">
    <location>
        <begin position="1"/>
        <end position="148"/>
    </location>
</feature>
<feature type="binding site" evidence="1">
    <location>
        <position position="112"/>
    </location>
    <ligand>
        <name>Zn(2+)</name>
        <dbReference type="ChEBI" id="CHEBI:29105"/>
        <note>catalytic</note>
    </ligand>
</feature>
<feature type="binding site" evidence="1">
    <location>
        <position position="116"/>
    </location>
    <ligand>
        <name>Zn(2+)</name>
        <dbReference type="ChEBI" id="CHEBI:29105"/>
        <note>catalytic</note>
    </ligand>
</feature>
<feature type="binding site" evidence="1">
    <location>
        <position position="122"/>
    </location>
    <ligand>
        <name>Zn(2+)</name>
        <dbReference type="ChEBI" id="CHEBI:29105"/>
        <note>catalytic</note>
    </ligand>
</feature>
<dbReference type="EC" id="3.1.-.-" evidence="1"/>
<dbReference type="EMBL" id="CP000267">
    <property type="protein sequence ID" value="ABD68487.1"/>
    <property type="molecule type" value="Genomic_DNA"/>
</dbReference>
<dbReference type="SMR" id="Q220R6"/>
<dbReference type="STRING" id="338969.Rfer_0737"/>
<dbReference type="KEGG" id="rfr:Rfer_0737"/>
<dbReference type="eggNOG" id="COG0319">
    <property type="taxonomic scope" value="Bacteria"/>
</dbReference>
<dbReference type="HOGENOM" id="CLU_106710_0_1_4"/>
<dbReference type="Proteomes" id="UP000008332">
    <property type="component" value="Chromosome"/>
</dbReference>
<dbReference type="GO" id="GO:0005737">
    <property type="term" value="C:cytoplasm"/>
    <property type="evidence" value="ECO:0007669"/>
    <property type="project" value="UniProtKB-SubCell"/>
</dbReference>
<dbReference type="GO" id="GO:0004222">
    <property type="term" value="F:metalloendopeptidase activity"/>
    <property type="evidence" value="ECO:0007669"/>
    <property type="project" value="InterPro"/>
</dbReference>
<dbReference type="GO" id="GO:0004521">
    <property type="term" value="F:RNA endonuclease activity"/>
    <property type="evidence" value="ECO:0007669"/>
    <property type="project" value="UniProtKB-UniRule"/>
</dbReference>
<dbReference type="GO" id="GO:0008270">
    <property type="term" value="F:zinc ion binding"/>
    <property type="evidence" value="ECO:0007669"/>
    <property type="project" value="UniProtKB-UniRule"/>
</dbReference>
<dbReference type="GO" id="GO:0006364">
    <property type="term" value="P:rRNA processing"/>
    <property type="evidence" value="ECO:0007669"/>
    <property type="project" value="UniProtKB-UniRule"/>
</dbReference>
<dbReference type="Gene3D" id="3.40.390.30">
    <property type="entry name" value="Metalloproteases ('zincins'), catalytic domain"/>
    <property type="match status" value="1"/>
</dbReference>
<dbReference type="HAMAP" id="MF_00009">
    <property type="entry name" value="Endoribonucl_YbeY"/>
    <property type="match status" value="1"/>
</dbReference>
<dbReference type="InterPro" id="IPR023091">
    <property type="entry name" value="MetalPrtase_cat_dom_sf_prd"/>
</dbReference>
<dbReference type="InterPro" id="IPR002036">
    <property type="entry name" value="YbeY"/>
</dbReference>
<dbReference type="InterPro" id="IPR020549">
    <property type="entry name" value="YbeY_CS"/>
</dbReference>
<dbReference type="NCBIfam" id="TIGR00043">
    <property type="entry name" value="rRNA maturation RNase YbeY"/>
    <property type="match status" value="1"/>
</dbReference>
<dbReference type="PANTHER" id="PTHR46986">
    <property type="entry name" value="ENDORIBONUCLEASE YBEY, CHLOROPLASTIC"/>
    <property type="match status" value="1"/>
</dbReference>
<dbReference type="PANTHER" id="PTHR46986:SF1">
    <property type="entry name" value="ENDORIBONUCLEASE YBEY, CHLOROPLASTIC"/>
    <property type="match status" value="1"/>
</dbReference>
<dbReference type="Pfam" id="PF02130">
    <property type="entry name" value="YbeY"/>
    <property type="match status" value="1"/>
</dbReference>
<dbReference type="SUPFAM" id="SSF55486">
    <property type="entry name" value="Metalloproteases ('zincins'), catalytic domain"/>
    <property type="match status" value="1"/>
</dbReference>
<dbReference type="PROSITE" id="PS01306">
    <property type="entry name" value="UPF0054"/>
    <property type="match status" value="1"/>
</dbReference>
<comment type="function">
    <text evidence="1">Single strand-specific metallo-endoribonuclease involved in late-stage 70S ribosome quality control and in maturation of the 3' terminus of the 16S rRNA.</text>
</comment>
<comment type="cofactor">
    <cofactor evidence="1">
        <name>Zn(2+)</name>
        <dbReference type="ChEBI" id="CHEBI:29105"/>
    </cofactor>
    <text evidence="1">Binds 1 zinc ion.</text>
</comment>
<comment type="subcellular location">
    <subcellularLocation>
        <location evidence="1">Cytoplasm</location>
    </subcellularLocation>
</comment>
<comment type="similarity">
    <text evidence="1">Belongs to the endoribonuclease YbeY family.</text>
</comment>
<reference key="1">
    <citation type="submission" date="2006-02" db="EMBL/GenBank/DDBJ databases">
        <title>Complete sequence of chromosome of Rhodoferax ferrireducens DSM 15236.</title>
        <authorList>
            <person name="Copeland A."/>
            <person name="Lucas S."/>
            <person name="Lapidus A."/>
            <person name="Barry K."/>
            <person name="Detter J.C."/>
            <person name="Glavina del Rio T."/>
            <person name="Hammon N."/>
            <person name="Israni S."/>
            <person name="Pitluck S."/>
            <person name="Brettin T."/>
            <person name="Bruce D."/>
            <person name="Han C."/>
            <person name="Tapia R."/>
            <person name="Gilna P."/>
            <person name="Kiss H."/>
            <person name="Schmutz J."/>
            <person name="Larimer F."/>
            <person name="Land M."/>
            <person name="Kyrpides N."/>
            <person name="Ivanova N."/>
            <person name="Richardson P."/>
        </authorList>
    </citation>
    <scope>NUCLEOTIDE SEQUENCE [LARGE SCALE GENOMIC DNA]</scope>
    <source>
        <strain>ATCC BAA-621 / DSM 15236 / T118</strain>
    </source>
</reference>
<protein>
    <recommendedName>
        <fullName evidence="1">Endoribonuclease YbeY</fullName>
        <ecNumber evidence="1">3.1.-.-</ecNumber>
    </recommendedName>
</protein>
<organism>
    <name type="scientific">Albidiferax ferrireducens (strain ATCC BAA-621 / DSM 15236 / T118)</name>
    <name type="common">Rhodoferax ferrireducens</name>
    <dbReference type="NCBI Taxonomy" id="338969"/>
    <lineage>
        <taxon>Bacteria</taxon>
        <taxon>Pseudomonadati</taxon>
        <taxon>Pseudomonadota</taxon>
        <taxon>Betaproteobacteria</taxon>
        <taxon>Burkholderiales</taxon>
        <taxon>Comamonadaceae</taxon>
        <taxon>Rhodoferax</taxon>
    </lineage>
</organism>
<accession>Q220R6</accession>
<evidence type="ECO:0000255" key="1">
    <source>
        <dbReference type="HAMAP-Rule" id="MF_00009"/>
    </source>
</evidence>
<sequence length="148" mass="16878">MLNQLTLSLQFGKLENPALHRGALPRHKVARWLRHALQSDAEITVRIVDTEEGQALNRDYRHKDYATNVLTFDYTQEPVVTADLVLCAPVVAQEAKEQGKTLQEHYAHLLVHGALHAQGWDHEAEEDAQVMELRESEIMARLGFENPY</sequence>
<gene>
    <name evidence="1" type="primary">ybeY</name>
    <name type="ordered locus">Rfer_0737</name>
</gene>
<name>YBEY_ALBFT</name>